<organism>
    <name type="scientific">Homo sapiens</name>
    <name type="common">Human</name>
    <dbReference type="NCBI Taxonomy" id="9606"/>
    <lineage>
        <taxon>Eukaryota</taxon>
        <taxon>Metazoa</taxon>
        <taxon>Chordata</taxon>
        <taxon>Craniata</taxon>
        <taxon>Vertebrata</taxon>
        <taxon>Euteleostomi</taxon>
        <taxon>Mammalia</taxon>
        <taxon>Eutheria</taxon>
        <taxon>Euarchontoglires</taxon>
        <taxon>Primates</taxon>
        <taxon>Haplorrhini</taxon>
        <taxon>Catarrhini</taxon>
        <taxon>Hominidae</taxon>
        <taxon>Homo</taxon>
    </lineage>
</organism>
<evidence type="ECO:0000250" key="1">
    <source>
        <dbReference type="UniProtKB" id="P07293"/>
    </source>
</evidence>
<evidence type="ECO:0000250" key="2">
    <source>
        <dbReference type="UniProtKB" id="Q02789"/>
    </source>
</evidence>
<evidence type="ECO:0000255" key="3"/>
<evidence type="ECO:0000256" key="4">
    <source>
        <dbReference type="SAM" id="MobiDB-lite"/>
    </source>
</evidence>
<evidence type="ECO:0000269" key="5">
    <source>
    </source>
</evidence>
<evidence type="ECO:0000269" key="6">
    <source>
    </source>
</evidence>
<evidence type="ECO:0000269" key="7">
    <source>
    </source>
</evidence>
<evidence type="ECO:0000269" key="8">
    <source>
    </source>
</evidence>
<evidence type="ECO:0000269" key="9">
    <source>
    </source>
</evidence>
<evidence type="ECO:0000269" key="10">
    <source>
    </source>
</evidence>
<evidence type="ECO:0000269" key="11">
    <source>
    </source>
</evidence>
<evidence type="ECO:0000269" key="12">
    <source>
    </source>
</evidence>
<evidence type="ECO:0000269" key="13">
    <source>
    </source>
</evidence>
<evidence type="ECO:0000269" key="14">
    <source>
    </source>
</evidence>
<evidence type="ECO:0000269" key="15">
    <source>
    </source>
</evidence>
<evidence type="ECO:0000269" key="16">
    <source>
    </source>
</evidence>
<evidence type="ECO:0000269" key="17">
    <source>
    </source>
</evidence>
<evidence type="ECO:0000269" key="18">
    <source>
    </source>
</evidence>
<evidence type="ECO:0000269" key="19">
    <source>
    </source>
</evidence>
<evidence type="ECO:0000303" key="20">
    <source>
    </source>
</evidence>
<evidence type="ECO:0000303" key="21">
    <source>
    </source>
</evidence>
<evidence type="ECO:0000305" key="22"/>
<evidence type="ECO:0007744" key="23">
    <source>
        <dbReference type="PDB" id="2VAY"/>
    </source>
</evidence>
<evidence type="ECO:0007744" key="24">
    <source>
        <dbReference type="PDB" id="6B27"/>
    </source>
</evidence>
<evidence type="ECO:0007829" key="25">
    <source>
        <dbReference type="PDB" id="2VAY"/>
    </source>
</evidence>
<sequence>MEPSSPQDEGLRKKQPKKPVPEILPRPPRALFCLTLENPLRKACISIVEWKPFETIILLTIFANCVALAVYLPMPEDDNNSLNLGLEKLEYFFLIVFSIEAAMKIIAYGFLFHQDAYLRSGWNVLDFTIVFLGVFTVILEQVNVIQSHTAPMSSKGAGLDVKALRAFRVLRPLRLVSGVPSLQVVLNSIFKAMLPLFHIALLVLFMVIIYAIIGLELFKGKMHKTCYFIGTDIVATVENEEPSPCARTGSGRRCTINGSECRGGWPGPNHGITHFDNFGFSMLTVYQCITMEGWTDVLYWVNDAIGNEWPWIYFVTLILLGSFFILNLVLGVLSGEFTKEREKAKSRGTFQKLREKQQLDEDLRGYMSWITQGEVMDVEDFREGKLSLDEGGSDTESLYEIAGLNKIIQFIRHWRQWNRIFRWKCHDIVKSKVFYWLVILIVALNTLSIASEHHNQPLWLTRLQDIANRVLLSLFTTEMLMKMYGLGLRQYFMSIFNRFDCFVVCSGILEILLVESGAMTPLGISVLRCIRLLRIFKITKYWTSLSNLVASLLNSIRSIASLLLLLFLFIVIFALLGMQLFGGRYDFEDTEVRRSNFDNFPQALISVFQVLTGEDWTSMMYNGIMAYGGPSYPGMLVCIYFIILFVCGNYILLNVFLAIAVDNLAEAESLTSAQKAKAEEKKRRKMSKGLPDKSEEEKSTMAKKLEQKPKGEGIPTTAKLKIDEFESNVNEVKDPYPSADFPGDDEEDEPEIPLSPRPRPLAELQLKEKAVPIPEASSFFIFSPTNKIRVLCHRIVNATWFTNFILLFILLSSAALAAEDPIRADSMRNQILKHFDIGFTSVFTVEIVLKMTTYGAFLHKGSFCRNYFNMLDLLVVAVSLISMGLESSAISVVKILRVLRVLRPLRAINRAKGLKHVVQCMFVAISTIGNIVLVTTLLQFMFACIGVQLFKGKFFRCTDLSKMTEEECRGYYYVYKDGDPMQIELRHREWVHSDFHFDNVLSAMMSLFTVSTFEGWPQLLYKAIDSNAEDVGPIYNNRVEMAIFFIIYIILIAFFMMNIFVGFVIVTFQEQGETEYKNCELDKNQRQCVQYALKARPLRCYIPKNPYQYQVWYIVTSSYFEYLMFALIMLNTICLGMQHYNQSEQMNHISDILNVAFTIIFTLEMILKLMAFKARGYFGDPWNVFDFLIVIGSIIDVILSEIDTFLASSGGLYCLGGGCGNVDPDESARISSAFFRLFRVMRLIKLLSRAEGVRTLLWTFIKSFQALPYVALLIVMLFFIYAVIGMQMFGKIALVDGTQINRNNNFQTFPQAVLLLFRCATGEAWQEILLACSYGKLCDPESDYAPGEEYTCGTNFAYYYFISFYMLCAFLVINLFVAVIMDNFDYLTRDWSILGPHHLDEFKAIWAEYDPEAKGRIKHLDVVTLLRRIQPPLGFGKFCPHRVACKRLVGMNMPLNSDGTVTFNATLFALVRTALKIKTEGNFEQANEELRAIIKKIWKRTSMKLLDQVIPPIGDDEVTVGKFYATFLIQEHFRKFMKRQEEYYGYRPKKDIVQIQAGLRTIEEEAAPEICRTVSGDLAAEEELERAMVEAAMEEGIFRRTGGLFGQVDNFLERTNSLPPVMANQRPLQFAEIEMEEMESPVFLEDFPQDPRTNPLARANTNNANANVAYGNSNHSNSHVFSSVHYEREFPEETETPATRGRALGQPCRVLGPHSKPCVEMLKGLLTQRAMPRGQAPPAPCQCPRVESSMPEDRKSSTPGSLHEETPHSRSTRENTSRCSAPATALLIQKALVRGGLGTLAADANFIMATGQALADACQMEPEEVEIMATELLKGREAPEGMASSLGCLNLGSSLGSLDQHQGSQETLIPPRL</sequence>
<keyword id="KW-0002">3D-structure</keyword>
<keyword id="KW-0106">Calcium</keyword>
<keyword id="KW-0107">Calcium channel</keyword>
<keyword id="KW-0109">Calcium transport</keyword>
<keyword id="KW-0112">Calmodulin-binding</keyword>
<keyword id="KW-1003">Cell membrane</keyword>
<keyword id="KW-0225">Disease variant</keyword>
<keyword id="KW-1015">Disulfide bond</keyword>
<keyword id="KW-0325">Glycoprotein</keyword>
<keyword id="KW-0407">Ion channel</keyword>
<keyword id="KW-0406">Ion transport</keyword>
<keyword id="KW-0472">Membrane</keyword>
<keyword id="KW-0479">Metal-binding</keyword>
<keyword id="KW-0597">Phosphoprotein</keyword>
<keyword id="KW-1267">Proteomics identification</keyword>
<keyword id="KW-1185">Reference proteome</keyword>
<keyword id="KW-0677">Repeat</keyword>
<keyword id="KW-0812">Transmembrane</keyword>
<keyword id="KW-1133">Transmembrane helix</keyword>
<keyword id="KW-0813">Transport</keyword>
<keyword id="KW-0851">Voltage-gated channel</keyword>
<protein>
    <recommendedName>
        <fullName>Voltage-dependent L-type calcium channel subunit alpha-1S</fullName>
    </recommendedName>
    <alternativeName>
        <fullName>Calcium channel, L type, alpha-1 polypeptide, isoform 3, skeletal muscle</fullName>
    </alternativeName>
    <alternativeName>
        <fullName>Voltage-gated calcium channel subunit alpha Cav1.1</fullName>
    </alternativeName>
</protein>
<proteinExistence type="evidence at protein level"/>
<dbReference type="EMBL" id="L33798">
    <property type="protein sequence ID" value="AAA51902.1"/>
    <property type="molecule type" value="mRNA"/>
</dbReference>
<dbReference type="EMBL" id="U30707">
    <property type="protein sequence ID" value="AAB37235.1"/>
    <property type="molecule type" value="Genomic_DNA"/>
</dbReference>
<dbReference type="EMBL" id="U30666">
    <property type="protein sequence ID" value="AAB37235.1"/>
    <property type="status" value="JOINED"/>
    <property type="molecule type" value="Genomic_DNA"/>
</dbReference>
<dbReference type="EMBL" id="U30667">
    <property type="protein sequence ID" value="AAB37235.1"/>
    <property type="status" value="JOINED"/>
    <property type="molecule type" value="Genomic_DNA"/>
</dbReference>
<dbReference type="EMBL" id="U30668">
    <property type="protein sequence ID" value="AAB37235.1"/>
    <property type="status" value="JOINED"/>
    <property type="molecule type" value="Genomic_DNA"/>
</dbReference>
<dbReference type="EMBL" id="U30669">
    <property type="protein sequence ID" value="AAB37235.1"/>
    <property type="status" value="JOINED"/>
    <property type="molecule type" value="Genomic_DNA"/>
</dbReference>
<dbReference type="EMBL" id="U30670">
    <property type="protein sequence ID" value="AAB37235.1"/>
    <property type="status" value="JOINED"/>
    <property type="molecule type" value="Genomic_DNA"/>
</dbReference>
<dbReference type="EMBL" id="U30671">
    <property type="protein sequence ID" value="AAB37235.1"/>
    <property type="status" value="JOINED"/>
    <property type="molecule type" value="Genomic_DNA"/>
</dbReference>
<dbReference type="EMBL" id="U30672">
    <property type="protein sequence ID" value="AAB37235.1"/>
    <property type="status" value="JOINED"/>
    <property type="molecule type" value="Genomic_DNA"/>
</dbReference>
<dbReference type="EMBL" id="U30673">
    <property type="protein sequence ID" value="AAB37235.1"/>
    <property type="status" value="JOINED"/>
    <property type="molecule type" value="Genomic_DNA"/>
</dbReference>
<dbReference type="EMBL" id="U30674">
    <property type="protein sequence ID" value="AAB37235.1"/>
    <property type="status" value="JOINED"/>
    <property type="molecule type" value="Genomic_DNA"/>
</dbReference>
<dbReference type="EMBL" id="U30675">
    <property type="protein sequence ID" value="AAB37235.1"/>
    <property type="status" value="JOINED"/>
    <property type="molecule type" value="Genomic_DNA"/>
</dbReference>
<dbReference type="EMBL" id="U30676">
    <property type="protein sequence ID" value="AAB37235.1"/>
    <property type="status" value="JOINED"/>
    <property type="molecule type" value="Genomic_DNA"/>
</dbReference>
<dbReference type="EMBL" id="U30677">
    <property type="protein sequence ID" value="AAB37235.1"/>
    <property type="status" value="JOINED"/>
    <property type="molecule type" value="Genomic_DNA"/>
</dbReference>
<dbReference type="EMBL" id="U30678">
    <property type="protein sequence ID" value="AAB37235.1"/>
    <property type="status" value="JOINED"/>
    <property type="molecule type" value="Genomic_DNA"/>
</dbReference>
<dbReference type="EMBL" id="U30679">
    <property type="protein sequence ID" value="AAB37235.1"/>
    <property type="status" value="JOINED"/>
    <property type="molecule type" value="Genomic_DNA"/>
</dbReference>
<dbReference type="EMBL" id="U30680">
    <property type="protein sequence ID" value="AAB37235.1"/>
    <property type="status" value="JOINED"/>
    <property type="molecule type" value="Genomic_DNA"/>
</dbReference>
<dbReference type="EMBL" id="U30681">
    <property type="protein sequence ID" value="AAB37235.1"/>
    <property type="status" value="JOINED"/>
    <property type="molecule type" value="Genomic_DNA"/>
</dbReference>
<dbReference type="EMBL" id="U30682">
    <property type="protein sequence ID" value="AAB37235.1"/>
    <property type="status" value="JOINED"/>
    <property type="molecule type" value="Genomic_DNA"/>
</dbReference>
<dbReference type="EMBL" id="U30683">
    <property type="protein sequence ID" value="AAB37235.1"/>
    <property type="status" value="JOINED"/>
    <property type="molecule type" value="Genomic_DNA"/>
</dbReference>
<dbReference type="EMBL" id="U30684">
    <property type="protein sequence ID" value="AAB37235.1"/>
    <property type="status" value="JOINED"/>
    <property type="molecule type" value="Genomic_DNA"/>
</dbReference>
<dbReference type="EMBL" id="U30685">
    <property type="protein sequence ID" value="AAB37235.1"/>
    <property type="status" value="JOINED"/>
    <property type="molecule type" value="Genomic_DNA"/>
</dbReference>
<dbReference type="EMBL" id="U30686">
    <property type="protein sequence ID" value="AAB37235.1"/>
    <property type="status" value="JOINED"/>
    <property type="molecule type" value="Genomic_DNA"/>
</dbReference>
<dbReference type="EMBL" id="U30687">
    <property type="protein sequence ID" value="AAB37235.1"/>
    <property type="status" value="JOINED"/>
    <property type="molecule type" value="Genomic_DNA"/>
</dbReference>
<dbReference type="EMBL" id="U30688">
    <property type="protein sequence ID" value="AAB37235.1"/>
    <property type="status" value="JOINED"/>
    <property type="molecule type" value="Genomic_DNA"/>
</dbReference>
<dbReference type="EMBL" id="U30689">
    <property type="protein sequence ID" value="AAB37235.1"/>
    <property type="status" value="JOINED"/>
    <property type="molecule type" value="Genomic_DNA"/>
</dbReference>
<dbReference type="EMBL" id="U30690">
    <property type="protein sequence ID" value="AAB37235.1"/>
    <property type="status" value="JOINED"/>
    <property type="molecule type" value="Genomic_DNA"/>
</dbReference>
<dbReference type="EMBL" id="U30691">
    <property type="protein sequence ID" value="AAB37235.1"/>
    <property type="status" value="JOINED"/>
    <property type="molecule type" value="Genomic_DNA"/>
</dbReference>
<dbReference type="EMBL" id="U30692">
    <property type="protein sequence ID" value="AAB37235.1"/>
    <property type="status" value="JOINED"/>
    <property type="molecule type" value="Genomic_DNA"/>
</dbReference>
<dbReference type="EMBL" id="U30693">
    <property type="protein sequence ID" value="AAB37235.1"/>
    <property type="status" value="JOINED"/>
    <property type="molecule type" value="Genomic_DNA"/>
</dbReference>
<dbReference type="EMBL" id="U30694">
    <property type="protein sequence ID" value="AAB37235.1"/>
    <property type="status" value="JOINED"/>
    <property type="molecule type" value="Genomic_DNA"/>
</dbReference>
<dbReference type="EMBL" id="U30695">
    <property type="protein sequence ID" value="AAB37235.1"/>
    <property type="status" value="JOINED"/>
    <property type="molecule type" value="Genomic_DNA"/>
</dbReference>
<dbReference type="EMBL" id="U30696">
    <property type="protein sequence ID" value="AAB37235.1"/>
    <property type="status" value="JOINED"/>
    <property type="molecule type" value="Genomic_DNA"/>
</dbReference>
<dbReference type="EMBL" id="U30697">
    <property type="protein sequence ID" value="AAB37235.1"/>
    <property type="status" value="JOINED"/>
    <property type="molecule type" value="Genomic_DNA"/>
</dbReference>
<dbReference type="EMBL" id="U30698">
    <property type="protein sequence ID" value="AAB37235.1"/>
    <property type="status" value="JOINED"/>
    <property type="molecule type" value="Genomic_DNA"/>
</dbReference>
<dbReference type="EMBL" id="U30699">
    <property type="protein sequence ID" value="AAB37235.1"/>
    <property type="status" value="JOINED"/>
    <property type="molecule type" value="Genomic_DNA"/>
</dbReference>
<dbReference type="EMBL" id="U30700">
    <property type="protein sequence ID" value="AAB37235.1"/>
    <property type="status" value="JOINED"/>
    <property type="molecule type" value="Genomic_DNA"/>
</dbReference>
<dbReference type="EMBL" id="U30701">
    <property type="protein sequence ID" value="AAB37235.1"/>
    <property type="status" value="JOINED"/>
    <property type="molecule type" value="Genomic_DNA"/>
</dbReference>
<dbReference type="EMBL" id="U30702">
    <property type="protein sequence ID" value="AAB37235.1"/>
    <property type="status" value="JOINED"/>
    <property type="molecule type" value="Genomic_DNA"/>
</dbReference>
<dbReference type="EMBL" id="U30703">
    <property type="protein sequence ID" value="AAB37235.1"/>
    <property type="status" value="JOINED"/>
    <property type="molecule type" value="Genomic_DNA"/>
</dbReference>
<dbReference type="EMBL" id="U30704">
    <property type="protein sequence ID" value="AAB37235.1"/>
    <property type="status" value="JOINED"/>
    <property type="molecule type" value="Genomic_DNA"/>
</dbReference>
<dbReference type="EMBL" id="U30705">
    <property type="protein sequence ID" value="AAB37235.1"/>
    <property type="status" value="JOINED"/>
    <property type="molecule type" value="Genomic_DNA"/>
</dbReference>
<dbReference type="EMBL" id="U30706">
    <property type="protein sequence ID" value="AAB37235.1"/>
    <property type="status" value="JOINED"/>
    <property type="molecule type" value="Genomic_DNA"/>
</dbReference>
<dbReference type="EMBL" id="AL358473">
    <property type="status" value="NOT_ANNOTATED_CDS"/>
    <property type="molecule type" value="Genomic_DNA"/>
</dbReference>
<dbReference type="EMBL" id="AL139159">
    <property type="status" value="NOT_ANNOTATED_CDS"/>
    <property type="molecule type" value="Genomic_DNA"/>
</dbReference>
<dbReference type="EMBL" id="BC133671">
    <property type="protein sequence ID" value="AAI33672.1"/>
    <property type="molecule type" value="mRNA"/>
</dbReference>
<dbReference type="EMBL" id="M87486">
    <property type="status" value="NOT_ANNOTATED_CDS"/>
    <property type="molecule type" value="Genomic_DNA"/>
</dbReference>
<dbReference type="EMBL" id="M87487">
    <property type="status" value="NOT_ANNOTATED_CDS"/>
    <property type="molecule type" value="Genomic_DNA"/>
</dbReference>
<dbReference type="EMBL" id="M87488">
    <property type="status" value="NOT_ANNOTATED_CDS"/>
    <property type="molecule type" value="Genomic_DNA"/>
</dbReference>
<dbReference type="EMBL" id="U09784">
    <property type="protein sequence ID" value="AAA20531.1"/>
    <property type="molecule type" value="mRNA"/>
</dbReference>
<dbReference type="EMBL" id="Z50091">
    <property type="status" value="NOT_ANNOTATED_CDS"/>
    <property type="molecule type" value="Genomic_DNA"/>
</dbReference>
<dbReference type="EMBL" id="Z50092">
    <property type="status" value="NOT_ANNOTATED_CDS"/>
    <property type="molecule type" value="Genomic_DNA"/>
</dbReference>
<dbReference type="EMBL" id="Z50093">
    <property type="status" value="NOT_ANNOTATED_CDS"/>
    <property type="molecule type" value="Genomic_DNA"/>
</dbReference>
<dbReference type="CCDS" id="CCDS1407.1"/>
<dbReference type="PIR" id="A55645">
    <property type="entry name" value="A55645"/>
</dbReference>
<dbReference type="PIR" id="I38611">
    <property type="entry name" value="I38611"/>
</dbReference>
<dbReference type="RefSeq" id="NP_000060.2">
    <property type="nucleotide sequence ID" value="NM_000069.3"/>
</dbReference>
<dbReference type="PDB" id="2VAY">
    <property type="method" value="X-ray"/>
    <property type="resolution" value="1.94 A"/>
    <property type="chains" value="B=1522-1542"/>
</dbReference>
<dbReference type="PDB" id="6B27">
    <property type="method" value="X-ray"/>
    <property type="resolution" value="1.73 A"/>
    <property type="chains" value="G/H/I/J/K/L=747-760"/>
</dbReference>
<dbReference type="PDBsum" id="2VAY"/>
<dbReference type="PDBsum" id="6B27"/>
<dbReference type="SMR" id="Q13698"/>
<dbReference type="BioGRID" id="107233">
    <property type="interactions" value="10"/>
</dbReference>
<dbReference type="ComplexPortal" id="CPX-3192">
    <property type="entry name" value="Cav1.1 voltage-gated calcium channel complex, CACNA2D1-CACNB1-CACNG1 variant"/>
</dbReference>
<dbReference type="ComplexPortal" id="CPX-8699">
    <property type="entry name" value="Cav1.1 voltage-gated calcium channel complex, CACNA2D1-CACNB2-CACNG1 variant"/>
</dbReference>
<dbReference type="ComplexPortal" id="CPX-8725">
    <property type="entry name" value="Cav1.1 voltage-gated calcium channel complex, CACNA2D1-CACNB3-CACNG1 variant"/>
</dbReference>
<dbReference type="ComplexPortal" id="CPX-8726">
    <property type="entry name" value="Cav1.1 voltage-gated calcium channel complex, CACNA2D1-CACNB4-CACNG1 variant"/>
</dbReference>
<dbReference type="ComplexPortal" id="CPX-8740">
    <property type="entry name" value="Cav1.1 voltage-gated calcium channel complex, CACNA2D2-CACNB1-CACNG1 variant"/>
</dbReference>
<dbReference type="ComplexPortal" id="CPX-8741">
    <property type="entry name" value="Cav1.1 voltage-gated calcium channel complex, CACNA2D2-CACNB2-CACNG1 variant"/>
</dbReference>
<dbReference type="ComplexPortal" id="CPX-8742">
    <property type="entry name" value="Cav1.1 voltage-gated calcium channel complex, CACNA2D2-CACNB3-CACNG1 variant"/>
</dbReference>
<dbReference type="ComplexPortal" id="CPX-8743">
    <property type="entry name" value="Cav1.1 voltage-gated calcium channel complex, CACNA2D2-CACNB4-CACNG1 variant"/>
</dbReference>
<dbReference type="ComplexPortal" id="CPX-8762">
    <property type="entry name" value="Cav1.1 voltage-gated calcium channel complex, CACNA2D3-CACNB1-CACNG1 variant"/>
</dbReference>
<dbReference type="ComplexPortal" id="CPX-8763">
    <property type="entry name" value="Cav1.1 voltage-gated calcium channel complex, CACNA2D3-CACNB2-CACNG1 variant"/>
</dbReference>
<dbReference type="ComplexPortal" id="CPX-8764">
    <property type="entry name" value="Cav1.1 voltage-gated calcium channel complex, CACNA2D3-CACNB3-CACNG1 variant"/>
</dbReference>
<dbReference type="ComplexPortal" id="CPX-8768">
    <property type="entry name" value="Cav1.1 voltage-gated calcium channel complex, CACNA2D3-CACNB4-CACNG1 variant"/>
</dbReference>
<dbReference type="ComplexPortal" id="CPX-8769">
    <property type="entry name" value="Cav1.1 voltage-gated calcium channel complex, CACNA2D4-CACNB1-CACNG1 variant"/>
</dbReference>
<dbReference type="ComplexPortal" id="CPX-8771">
    <property type="entry name" value="Cav1.1 voltage-gated calcium channel complex, CACNA2D4-CACNB2-CACNG1 variant"/>
</dbReference>
<dbReference type="ComplexPortal" id="CPX-8772">
    <property type="entry name" value="Cav1.1 voltage-gated calcium channel complex, CACNA2D4-CACNB3-CACNG1 variant"/>
</dbReference>
<dbReference type="ComplexPortal" id="CPX-8773">
    <property type="entry name" value="Cav1.1 voltage-gated calcium channel complex, CACNA2D4-CACNB4-CACNG1 variant"/>
</dbReference>
<dbReference type="FunCoup" id="Q13698">
    <property type="interactions" value="1277"/>
</dbReference>
<dbReference type="IntAct" id="Q13698">
    <property type="interactions" value="9"/>
</dbReference>
<dbReference type="MINT" id="Q13698"/>
<dbReference type="STRING" id="9606.ENSP00000355192"/>
<dbReference type="BindingDB" id="Q13698"/>
<dbReference type="ChEMBL" id="CHEMBL3805"/>
<dbReference type="DrugBank" id="DB01118">
    <property type="generic name" value="Amiodarone"/>
</dbReference>
<dbReference type="DrugBank" id="DB09229">
    <property type="generic name" value="Aranidipine"/>
</dbReference>
<dbReference type="DrugBank" id="DB09231">
    <property type="generic name" value="Benidipine"/>
</dbReference>
<dbReference type="DrugBank" id="DB13746">
    <property type="generic name" value="Bioallethrin"/>
</dbReference>
<dbReference type="DrugBank" id="DB11148">
    <property type="generic name" value="Butamben"/>
</dbReference>
<dbReference type="DrugBank" id="DB11093">
    <property type="generic name" value="Calcium citrate"/>
</dbReference>
<dbReference type="DrugBank" id="DB11348">
    <property type="generic name" value="Calcium Phosphate"/>
</dbReference>
<dbReference type="DrugBank" id="DB14481">
    <property type="generic name" value="Calcium phosphate dihydrate"/>
</dbReference>
<dbReference type="DrugBank" id="DB09232">
    <property type="generic name" value="Cilnidipine"/>
</dbReference>
<dbReference type="DrugBank" id="DB00568">
    <property type="generic name" value="Cinnarizine"/>
</dbReference>
<dbReference type="DrugBank" id="DB04920">
    <property type="generic name" value="Clevidipine"/>
</dbReference>
<dbReference type="DrugBank" id="DB04855">
    <property type="generic name" value="Dronedarone"/>
</dbReference>
<dbReference type="DrugBank" id="DB06751">
    <property type="generic name" value="Drotaverine"/>
</dbReference>
<dbReference type="DrugBank" id="DB09235">
    <property type="generic name" value="Efonidipine"/>
</dbReference>
<dbReference type="DrugBank" id="DB00228">
    <property type="generic name" value="Enflurane"/>
</dbReference>
<dbReference type="DrugBank" id="DB00153">
    <property type="generic name" value="Ergocalciferol"/>
</dbReference>
<dbReference type="DrugBank" id="DB00898">
    <property type="generic name" value="Ethanol"/>
</dbReference>
<dbReference type="DrugBank" id="DB01023">
    <property type="generic name" value="Felodipine"/>
</dbReference>
<dbReference type="DrugBank" id="DB13961">
    <property type="generic name" value="Fish oil"/>
</dbReference>
<dbReference type="DrugBank" id="DB00270">
    <property type="generic name" value="Isradipine"/>
</dbReference>
<dbReference type="DrugBank" id="DB09236">
    <property type="generic name" value="Lacidipine"/>
</dbReference>
<dbReference type="DrugBank" id="DB00825">
    <property type="generic name" value="Levomenthol"/>
</dbReference>
<dbReference type="DrugBank" id="DB00653">
    <property type="generic name" value="Magnesium sulfate"/>
</dbReference>
<dbReference type="DrugBank" id="DB09238">
    <property type="generic name" value="Manidipine"/>
</dbReference>
<dbReference type="DrugBank" id="DB01388">
    <property type="generic name" value="Mibefradil"/>
</dbReference>
<dbReference type="DrugBank" id="DB01110">
    <property type="generic name" value="Miconazole"/>
</dbReference>
<dbReference type="DrugBank" id="DB00622">
    <property type="generic name" value="Nicardipine"/>
</dbReference>
<dbReference type="DrugBank" id="DB01115">
    <property type="generic name" value="Nifedipine"/>
</dbReference>
<dbReference type="DrugBank" id="DB06712">
    <property type="generic name" value="Nilvadipine"/>
</dbReference>
<dbReference type="DrugBank" id="DB00393">
    <property type="generic name" value="Nimodipine"/>
</dbReference>
<dbReference type="DrugBank" id="DB00401">
    <property type="generic name" value="Nisoldipine"/>
</dbReference>
<dbReference type="DrugBank" id="DB01054">
    <property type="generic name" value="Nitrendipine"/>
</dbReference>
<dbReference type="DrugBank" id="DB00252">
    <property type="generic name" value="Phenytoin"/>
</dbReference>
<dbReference type="DrugBank" id="DB09090">
    <property type="generic name" value="Pinaverium"/>
</dbReference>
<dbReference type="DrugBank" id="DB00243">
    <property type="generic name" value="Ranolazine"/>
</dbReference>
<dbReference type="DrugBank" id="DB00421">
    <property type="generic name" value="Spironolactone"/>
</dbReference>
<dbReference type="DrugBank" id="DB00273">
    <property type="generic name" value="Topiramate"/>
</dbReference>
<dbReference type="DrugBank" id="DB09089">
    <property type="generic name" value="Trimebutine"/>
</dbReference>
<dbReference type="DrugBank" id="DB00661">
    <property type="generic name" value="Verapamil"/>
</dbReference>
<dbReference type="DrugCentral" id="Q13698"/>
<dbReference type="GuidetoPHARMACOLOGY" id="528"/>
<dbReference type="TCDB" id="1.A.1.11.32">
    <property type="family name" value="the voltage-gated ion channel (vic) superfamily"/>
</dbReference>
<dbReference type="GlyCosmos" id="Q13698">
    <property type="glycosylation" value="3 sites, No reported glycans"/>
</dbReference>
<dbReference type="GlyGen" id="Q13698">
    <property type="glycosylation" value="5 sites, 1 O-linked glycan (2 sites)"/>
</dbReference>
<dbReference type="iPTMnet" id="Q13698"/>
<dbReference type="PhosphoSitePlus" id="Q13698"/>
<dbReference type="BioMuta" id="CACNA1S"/>
<dbReference type="DMDM" id="209572767"/>
<dbReference type="jPOST" id="Q13698"/>
<dbReference type="MassIVE" id="Q13698"/>
<dbReference type="PaxDb" id="9606-ENSP00000355192"/>
<dbReference type="PeptideAtlas" id="Q13698"/>
<dbReference type="Antibodypedia" id="4015">
    <property type="antibodies" value="181 antibodies from 32 providers"/>
</dbReference>
<dbReference type="DNASU" id="779"/>
<dbReference type="Ensembl" id="ENST00000362061.4">
    <property type="protein sequence ID" value="ENSP00000355192.3"/>
    <property type="gene ID" value="ENSG00000081248.13"/>
</dbReference>
<dbReference type="GeneID" id="779"/>
<dbReference type="KEGG" id="hsa:779"/>
<dbReference type="MANE-Select" id="ENST00000362061.4">
    <property type="protein sequence ID" value="ENSP00000355192.3"/>
    <property type="RefSeq nucleotide sequence ID" value="NM_000069.3"/>
    <property type="RefSeq protein sequence ID" value="NP_000060.2"/>
</dbReference>
<dbReference type="UCSC" id="uc001gvv.4">
    <property type="organism name" value="human"/>
</dbReference>
<dbReference type="AGR" id="HGNC:1397"/>
<dbReference type="CTD" id="779"/>
<dbReference type="DisGeNET" id="779"/>
<dbReference type="GeneCards" id="CACNA1S"/>
<dbReference type="GeneReviews" id="CACNA1S"/>
<dbReference type="HGNC" id="HGNC:1397">
    <property type="gene designation" value="CACNA1S"/>
</dbReference>
<dbReference type="HPA" id="ENSG00000081248">
    <property type="expression patterns" value="Group enriched (skeletal muscle, tongue)"/>
</dbReference>
<dbReference type="MalaCards" id="CACNA1S"/>
<dbReference type="MIM" id="114208">
    <property type="type" value="gene"/>
</dbReference>
<dbReference type="MIM" id="170400">
    <property type="type" value="phenotype"/>
</dbReference>
<dbReference type="MIM" id="188580">
    <property type="type" value="phenotype"/>
</dbReference>
<dbReference type="MIM" id="601887">
    <property type="type" value="phenotype"/>
</dbReference>
<dbReference type="MIM" id="620246">
    <property type="type" value="phenotype"/>
</dbReference>
<dbReference type="neXtProt" id="NX_Q13698"/>
<dbReference type="OpenTargets" id="ENSG00000081248"/>
<dbReference type="Orphanet" id="681">
    <property type="disease" value="Hypokalemic periodic paralysis"/>
</dbReference>
<dbReference type="Orphanet" id="423">
    <property type="disease" value="Malignant hyperthermia of anesthesia"/>
</dbReference>
<dbReference type="Orphanet" id="397755">
    <property type="disease" value="Periodic paralysis with transient compartment-like syndrome"/>
</dbReference>
<dbReference type="Orphanet" id="79102">
    <property type="disease" value="Thyrotoxic periodic paralysis"/>
</dbReference>
<dbReference type="PharmGKB" id="PA85"/>
<dbReference type="VEuPathDB" id="HostDB:ENSG00000081248"/>
<dbReference type="eggNOG" id="KOG2301">
    <property type="taxonomic scope" value="Eukaryota"/>
</dbReference>
<dbReference type="GeneTree" id="ENSGT00940000158289"/>
<dbReference type="InParanoid" id="Q13698"/>
<dbReference type="OMA" id="WFENLED"/>
<dbReference type="OrthoDB" id="431720at2759"/>
<dbReference type="PAN-GO" id="Q13698">
    <property type="GO annotations" value="3 GO annotations based on evolutionary models"/>
</dbReference>
<dbReference type="PhylomeDB" id="Q13698"/>
<dbReference type="TreeFam" id="TF312805"/>
<dbReference type="PathwayCommons" id="Q13698"/>
<dbReference type="Reactome" id="R-HSA-419037">
    <property type="pathway name" value="NCAM1 interactions"/>
</dbReference>
<dbReference type="SignaLink" id="Q13698"/>
<dbReference type="SIGNOR" id="Q13698"/>
<dbReference type="BioGRID-ORCS" id="779">
    <property type="hits" value="24 hits in 1160 CRISPR screens"/>
</dbReference>
<dbReference type="ChiTaRS" id="CACNA1S">
    <property type="organism name" value="human"/>
</dbReference>
<dbReference type="EvolutionaryTrace" id="Q13698"/>
<dbReference type="GeneWiki" id="Cav1.1"/>
<dbReference type="GenomeRNAi" id="779"/>
<dbReference type="Pharos" id="Q13698">
    <property type="development level" value="Tclin"/>
</dbReference>
<dbReference type="PRO" id="PR:Q13698"/>
<dbReference type="Proteomes" id="UP000005640">
    <property type="component" value="Chromosome 1"/>
</dbReference>
<dbReference type="RNAct" id="Q13698">
    <property type="molecule type" value="protein"/>
</dbReference>
<dbReference type="Bgee" id="ENSG00000081248">
    <property type="expression patterns" value="Expressed in gluteal muscle and 83 other cell types or tissues"/>
</dbReference>
<dbReference type="ExpressionAtlas" id="Q13698">
    <property type="expression patterns" value="baseline and differential"/>
</dbReference>
<dbReference type="GO" id="GO:0005737">
    <property type="term" value="C:cytoplasm"/>
    <property type="evidence" value="ECO:0000314"/>
    <property type="project" value="UniProtKB"/>
</dbReference>
<dbReference type="GO" id="GO:0031674">
    <property type="term" value="C:I band"/>
    <property type="evidence" value="ECO:0000314"/>
    <property type="project" value="UniProtKB"/>
</dbReference>
<dbReference type="GO" id="GO:1990454">
    <property type="term" value="C:L-type voltage-gated calcium channel complex"/>
    <property type="evidence" value="ECO:0000250"/>
    <property type="project" value="UniProtKB"/>
</dbReference>
<dbReference type="GO" id="GO:0005886">
    <property type="term" value="C:plasma membrane"/>
    <property type="evidence" value="ECO:0000314"/>
    <property type="project" value="UniProtKB"/>
</dbReference>
<dbReference type="GO" id="GO:0016529">
    <property type="term" value="C:sarcoplasmic reticulum"/>
    <property type="evidence" value="ECO:0007669"/>
    <property type="project" value="Ensembl"/>
</dbReference>
<dbReference type="GO" id="GO:0030315">
    <property type="term" value="C:T-tubule"/>
    <property type="evidence" value="ECO:0000314"/>
    <property type="project" value="UniProtKB"/>
</dbReference>
<dbReference type="GO" id="GO:0005891">
    <property type="term" value="C:voltage-gated calcium channel complex"/>
    <property type="evidence" value="ECO:0000314"/>
    <property type="project" value="UniProtKB"/>
</dbReference>
<dbReference type="GO" id="GO:0005516">
    <property type="term" value="F:calmodulin binding"/>
    <property type="evidence" value="ECO:0007669"/>
    <property type="project" value="UniProtKB-KW"/>
</dbReference>
<dbReference type="GO" id="GO:0008331">
    <property type="term" value="F:high voltage-gated calcium channel activity"/>
    <property type="evidence" value="ECO:0000314"/>
    <property type="project" value="UniProtKB"/>
</dbReference>
<dbReference type="GO" id="GO:0046872">
    <property type="term" value="F:metal ion binding"/>
    <property type="evidence" value="ECO:0007669"/>
    <property type="project" value="UniProtKB-KW"/>
</dbReference>
<dbReference type="GO" id="GO:0140677">
    <property type="term" value="F:molecular function activator activity"/>
    <property type="evidence" value="ECO:0000269"/>
    <property type="project" value="DisProt"/>
</dbReference>
<dbReference type="GO" id="GO:0036094">
    <property type="term" value="F:small molecule binding"/>
    <property type="evidence" value="ECO:0000269"/>
    <property type="project" value="DisProt"/>
</dbReference>
<dbReference type="GO" id="GO:0005245">
    <property type="term" value="F:voltage-gated calcium channel activity"/>
    <property type="evidence" value="ECO:0000314"/>
    <property type="project" value="UniProtKB"/>
</dbReference>
<dbReference type="GO" id="GO:0098703">
    <property type="term" value="P:calcium ion import across plasma membrane"/>
    <property type="evidence" value="ECO:0000318"/>
    <property type="project" value="GO_Central"/>
</dbReference>
<dbReference type="GO" id="GO:0070588">
    <property type="term" value="P:calcium ion transmembrane transport"/>
    <property type="evidence" value="ECO:0000303"/>
    <property type="project" value="ComplexPortal"/>
</dbReference>
<dbReference type="GO" id="GO:0006816">
    <property type="term" value="P:calcium ion transport"/>
    <property type="evidence" value="ECO:0000314"/>
    <property type="project" value="UniProtKB"/>
</dbReference>
<dbReference type="GO" id="GO:0071313">
    <property type="term" value="P:cellular response to caffeine"/>
    <property type="evidence" value="ECO:0000250"/>
    <property type="project" value="UniProtKB"/>
</dbReference>
<dbReference type="GO" id="GO:0007029">
    <property type="term" value="P:endoplasmic reticulum organization"/>
    <property type="evidence" value="ECO:0007669"/>
    <property type="project" value="Ensembl"/>
</dbReference>
<dbReference type="GO" id="GO:0002074">
    <property type="term" value="P:extraocular skeletal muscle development"/>
    <property type="evidence" value="ECO:0007669"/>
    <property type="project" value="Ensembl"/>
</dbReference>
<dbReference type="GO" id="GO:0006936">
    <property type="term" value="P:muscle contraction"/>
    <property type="evidence" value="ECO:0000315"/>
    <property type="project" value="UniProtKB"/>
</dbReference>
<dbReference type="GO" id="GO:0007520">
    <property type="term" value="P:myoblast fusion"/>
    <property type="evidence" value="ECO:0007669"/>
    <property type="project" value="Ensembl"/>
</dbReference>
<dbReference type="GO" id="GO:0007528">
    <property type="term" value="P:neuromuscular junction development"/>
    <property type="evidence" value="ECO:0007669"/>
    <property type="project" value="Ensembl"/>
</dbReference>
<dbReference type="GO" id="GO:0045933">
    <property type="term" value="P:positive regulation of muscle contraction"/>
    <property type="evidence" value="ECO:0000303"/>
    <property type="project" value="ComplexPortal"/>
</dbReference>
<dbReference type="GO" id="GO:0051209">
    <property type="term" value="P:release of sequestered calcium ion into cytosol"/>
    <property type="evidence" value="ECO:0000315"/>
    <property type="project" value="UniProtKB"/>
</dbReference>
<dbReference type="GO" id="GO:0043501">
    <property type="term" value="P:skeletal muscle adaptation"/>
    <property type="evidence" value="ECO:0007669"/>
    <property type="project" value="Ensembl"/>
</dbReference>
<dbReference type="GO" id="GO:0048741">
    <property type="term" value="P:skeletal muscle fiber development"/>
    <property type="evidence" value="ECO:0007669"/>
    <property type="project" value="Ensembl"/>
</dbReference>
<dbReference type="GO" id="GO:0001501">
    <property type="term" value="P:skeletal system development"/>
    <property type="evidence" value="ECO:0007669"/>
    <property type="project" value="Ensembl"/>
</dbReference>
<dbReference type="GO" id="GO:0006941">
    <property type="term" value="P:striated muscle contraction"/>
    <property type="evidence" value="ECO:0007669"/>
    <property type="project" value="Ensembl"/>
</dbReference>
<dbReference type="DisProt" id="DP01103"/>
<dbReference type="FunFam" id="1.10.287.70:FF:000007">
    <property type="entry name" value="Voltage-dependent L-type calcium channel subunit alpha"/>
    <property type="match status" value="1"/>
</dbReference>
<dbReference type="FunFam" id="1.10.287.70:FF:000009">
    <property type="entry name" value="Voltage-dependent L-type calcium channel subunit alpha"/>
    <property type="match status" value="1"/>
</dbReference>
<dbReference type="FunFam" id="1.10.287.70:FF:000021">
    <property type="entry name" value="Voltage-dependent L-type calcium channel subunit alpha"/>
    <property type="match status" value="1"/>
</dbReference>
<dbReference type="FunFam" id="1.20.120.350:FF:000001">
    <property type="entry name" value="Voltage-dependent L-type calcium channel subunit alpha"/>
    <property type="match status" value="1"/>
</dbReference>
<dbReference type="FunFam" id="1.20.120.350:FF:000006">
    <property type="entry name" value="Voltage-dependent L-type calcium channel subunit alpha"/>
    <property type="match status" value="1"/>
</dbReference>
<dbReference type="FunFam" id="1.20.120.350:FF:000010">
    <property type="entry name" value="Voltage-dependent L-type calcium channel subunit alpha"/>
    <property type="match status" value="1"/>
</dbReference>
<dbReference type="FunFam" id="1.20.120.350:FF:000040">
    <property type="entry name" value="Voltage-dependent L-type calcium channel subunit alpha"/>
    <property type="match status" value="1"/>
</dbReference>
<dbReference type="FunFam" id="1.10.238.10:FF:000063">
    <property type="entry name" value="Voltage-dependent N-type calcium channel subunit alpha"/>
    <property type="match status" value="1"/>
</dbReference>
<dbReference type="Gene3D" id="1.10.287.70">
    <property type="match status" value="4"/>
</dbReference>
<dbReference type="Gene3D" id="6.10.250.2180">
    <property type="match status" value="1"/>
</dbReference>
<dbReference type="Gene3D" id="6.10.250.2500">
    <property type="match status" value="1"/>
</dbReference>
<dbReference type="Gene3D" id="1.20.120.350">
    <property type="entry name" value="Voltage-gated potassium channels. Chain C"/>
    <property type="match status" value="4"/>
</dbReference>
<dbReference type="InterPro" id="IPR031649">
    <property type="entry name" value="GPHH_dom"/>
</dbReference>
<dbReference type="InterPro" id="IPR005821">
    <property type="entry name" value="Ion_trans_dom"/>
</dbReference>
<dbReference type="InterPro" id="IPR014873">
    <property type="entry name" value="VDCC_a1su_IQ"/>
</dbReference>
<dbReference type="InterPro" id="IPR050599">
    <property type="entry name" value="VDCC_alpha-1_subunit"/>
</dbReference>
<dbReference type="InterPro" id="IPR005450">
    <property type="entry name" value="VDCC_L_a1ssu"/>
</dbReference>
<dbReference type="InterPro" id="IPR005446">
    <property type="entry name" value="VDCC_L_a1su"/>
</dbReference>
<dbReference type="InterPro" id="IPR002077">
    <property type="entry name" value="VDCCAlpha1"/>
</dbReference>
<dbReference type="InterPro" id="IPR027359">
    <property type="entry name" value="Volt_channel_dom_sf"/>
</dbReference>
<dbReference type="PANTHER" id="PTHR45628">
    <property type="entry name" value="VOLTAGE-DEPENDENT CALCIUM CHANNEL TYPE A SUBUNIT ALPHA-1"/>
    <property type="match status" value="1"/>
</dbReference>
<dbReference type="PANTHER" id="PTHR45628:SF9">
    <property type="entry name" value="VOLTAGE-DEPENDENT L-TYPE CALCIUM CHANNEL SUBUNIT ALPHA-1S"/>
    <property type="match status" value="1"/>
</dbReference>
<dbReference type="Pfam" id="PF08763">
    <property type="entry name" value="Ca_chan_IQ"/>
    <property type="match status" value="1"/>
</dbReference>
<dbReference type="Pfam" id="PF16905">
    <property type="entry name" value="GPHH"/>
    <property type="match status" value="1"/>
</dbReference>
<dbReference type="Pfam" id="PF00520">
    <property type="entry name" value="Ion_trans"/>
    <property type="match status" value="4"/>
</dbReference>
<dbReference type="PRINTS" id="PR00167">
    <property type="entry name" value="CACHANNEL"/>
</dbReference>
<dbReference type="PRINTS" id="PR01630">
    <property type="entry name" value="LVDCCALPHA1"/>
</dbReference>
<dbReference type="PRINTS" id="PR01634">
    <property type="entry name" value="LVDCCALPHA1S"/>
</dbReference>
<dbReference type="SMART" id="SM01062">
    <property type="entry name" value="Ca_chan_IQ"/>
    <property type="match status" value="1"/>
</dbReference>
<dbReference type="SUPFAM" id="SSF81324">
    <property type="entry name" value="Voltage-gated potassium channels"/>
    <property type="match status" value="4"/>
</dbReference>
<comment type="function">
    <text evidence="11">Pore-forming, alpha-1S subunit of the voltage-gated calcium channel that gives rise to L-type calcium currents in skeletal muscle. Calcium channels containing the alpha-1S subunit play an important role in excitation-contraction coupling in skeletal muscle via their interaction with RYR1, which triggers Ca(2+) release from the sarcoplasmic reticulum and ultimately results in muscle contraction. Long-lasting (L-type) calcium channels belong to the 'high-voltage activated' (HVA) group.</text>
</comment>
<comment type="catalytic activity">
    <reaction evidence="11">
        <text>Ca(2+)(in) = Ca(2+)(out)</text>
        <dbReference type="Rhea" id="RHEA:29671"/>
        <dbReference type="ChEBI" id="CHEBI:29108"/>
    </reaction>
</comment>
<comment type="activity regulation">
    <text evidence="1">Channel activity is blocked by dihydropyridines (DHP), phenylalkylamines, and by benzothiazepines.</text>
</comment>
<comment type="subunit">
    <text evidence="1 2 10 12">Component of a calcium channel complex consisting of a pore-forming alpha subunit (CACNA1S) and the ancillary subunits CACNB1 or CACNB2, CACNG1 and CACNA2D1. The channel complex contains alpha, beta, gamma and delta subunits in a 1:1:1:1 ratio, i.e. it contains either CACNB1 or CACNB2 (By similarity). CACNA1S channel activity is modulated by the auxiliary subunits (CACNB1 or CACNB2, CACNG1 and CACNA2D1). Interacts with DYSF and JSRP1 (By similarity). Interacts with RYR1 (By similarity). Interacts with STAC, STAC2 and STAC3 (via their SH3 domains) (PubMed:29078335). Interacts with CALM (PubMed:19473981).</text>
</comment>
<comment type="interaction">
    <interactant intactId="EBI-5329490">
        <id>Q13698</id>
    </interactant>
    <interactant intactId="EBI-711501">
        <id>Q9BWC9</id>
        <label>CCDC106</label>
    </interactant>
    <organismsDiffer>false</organismsDiffer>
    <experiments>3</experiments>
</comment>
<comment type="interaction">
    <interactant intactId="EBI-5329490">
        <id>Q13698</id>
    </interactant>
    <interactant intactId="EBI-3867333">
        <id>A8MQ03</id>
        <label>CYSRT1</label>
    </interactant>
    <organismsDiffer>false</organismsDiffer>
    <experiments>3</experiments>
</comment>
<comment type="interaction">
    <interactant intactId="EBI-5329490">
        <id>Q13698</id>
    </interactant>
    <interactant intactId="EBI-16439278">
        <id>Q6FHY5</id>
        <label>MEOX2</label>
    </interactant>
    <organismsDiffer>false</organismsDiffer>
    <experiments>3</experiments>
</comment>
<comment type="interaction">
    <interactant intactId="EBI-5329490">
        <id>Q13698</id>
    </interactant>
    <interactant intactId="EBI-8744528">
        <id>Q86UT5</id>
        <label>NHERF4</label>
    </interactant>
    <organismsDiffer>false</organismsDiffer>
    <experiments>3</experiments>
</comment>
<comment type="interaction">
    <interactant intactId="EBI-5329490">
        <id>Q13698</id>
    </interactant>
    <interactant intactId="EBI-10829018">
        <id>Q04864-2</id>
        <label>REL</label>
    </interactant>
    <organismsDiffer>false</organismsDiffer>
    <experiments>3</experiments>
</comment>
<comment type="interaction">
    <interactant intactId="EBI-5329490">
        <id>Q13698</id>
    </interactant>
    <interactant intactId="EBI-4398527">
        <id>Q9H2K2</id>
        <label>TNKS2</label>
    </interactant>
    <organismsDiffer>false</organismsDiffer>
    <experiments>2</experiments>
</comment>
<comment type="subcellular location">
    <subcellularLocation>
        <location evidence="11">Cell membrane</location>
        <location evidence="11">Sarcolemma</location>
        <location evidence="11">T-tubule</location>
        <topology evidence="1">Multi-pass membrane protein</topology>
    </subcellularLocation>
</comment>
<comment type="tissue specificity">
    <text>Skeletal muscle specific.</text>
</comment>
<comment type="domain">
    <text evidence="1">Each of the four internal repeats contains five hydrophobic transmembrane segments (S1, S2, S3, S5, S6) and one positively charged transmembrane segment (S4). S4 segments probably represent the voltage-sensor and are characterized by a series of positively charged amino acids at every third position.</text>
</comment>
<comment type="domain">
    <text evidence="1">The loop between repeats II and III interacts with the ryanodine receptor, and is therefore important for calcium release from the endoplasmic reticulum necessary for muscle contraction.</text>
</comment>
<comment type="PTM">
    <text evidence="1">The alpha-1S subunit is found in two isoforms in the skeletal muscle: a minor form of 212 kDa containing the complete amino acid sequence, and a major form of 190 kDa derived from the full-length form by post-translational proteolysis close to Phe-1690.</text>
</comment>
<comment type="PTM">
    <text evidence="1">Phosphorylated. Phosphorylation by PKA activates the calcium channel. Both the minor and major forms are phosphorylated in vitro by PKA. Phosphorylation at Ser-1575 is involved in beta-adrenergic-mediated regulation of the channel.</text>
</comment>
<comment type="disease" evidence="7 8 9 16 17">
    <disease id="DI-00907">
        <name>Periodic paralysis hypokalemic 1</name>
        <acronym>HOKPP1</acronym>
        <description>An autosomal dominant disorder manifested by episodic flaccid generalized muscle weakness associated with falls of serum potassium levels.</description>
        <dbReference type="MIM" id="170400"/>
    </disease>
    <text>The disease is caused by variants affecting the gene represented in this entry.</text>
</comment>
<comment type="disease" evidence="19">
    <disease id="DI-01930">
        <name>Malignant hyperthermia 5</name>
        <acronym>MHS5</acronym>
        <description>Autosomal dominant disorder that is potentially lethal in susceptible individuals on exposure to commonly used inhalational anesthetics and depolarizing muscle relaxants.</description>
        <dbReference type="MIM" id="601887"/>
    </disease>
    <text>Disease susceptibility is associated with variants affecting the gene represented in this entry.</text>
</comment>
<comment type="disease" evidence="5">
    <disease id="DI-02368">
        <name>Thyrotoxic periodic paralysis 1</name>
        <acronym>TTPP1</acronym>
        <description>A sporadic muscular disorder characterized by episodic weakness and hypokalemia during a thyrotoxic state. It is clinically similar to hereditary hypokalemic periodic paralysis, except for the fact that hyperthyroidism is an absolute requirement for disease manifestation. The disease presents with recurrent episodes of acute muscular weakness of the four extremities that vary in severity from paresis to complete paralysis. Attacks are triggered by ingestion of a high carbohydrate load or strenuous physical activity followed by a period of rest. Thyrotoxic periodic paralysis can occur in association with any cause of hyperthyroidism, but is most commonly associated with Graves disease.</description>
        <dbReference type="MIM" id="188580"/>
    </disease>
    <text>Disease susceptibility is associated with variants affecting the gene represented in this entry.</text>
</comment>
<comment type="disease" evidence="11 13 14">
    <disease id="DI-06613">
        <name>Congenital myopathy 18</name>
        <acronym>CMYO18</acronym>
        <description>A congenital myopathy of variable severity, ranging from severe fetal akinesia to milder forms of muscle weakness. Most affected individuals show delayed motor development with generalized hypotonia and progressive axial and limb muscle weakness beginning soon after birth or in infancy. Additional features may include swallowing difficulties, external ophthalmoplegia, ptosis, high-arched palate, and respiratory insufficiency. Muscle biopsy shows variable morphologic abnormalities, including alveolar changes in the intermyofibrillar network, fiber size variability, focal disorganization, internal nuclei, and dilated sarcoplasmic reticulum and T-tubules. CMYO18 inheritance is autosomal dominant or recessive.</description>
        <dbReference type="MIM" id="620246"/>
    </disease>
    <text>The disease is caused by variants affecting the gene represented in this entry.</text>
</comment>
<comment type="similarity">
    <text evidence="22">Belongs to the calcium channel alpha-1 subunit (TC 1.A.1.11) family. CACNA1S subfamily.</text>
</comment>
<reference key="1">
    <citation type="journal article" date="1994" name="Genomics">
        <title>Cloning of the human skeletal muscle alpha 1 subunit of the dihydropyridine-sensitive L-type calcium channel (CACNL1A3).</title>
        <authorList>
            <person name="Hogan K."/>
            <person name="Powers P.A."/>
            <person name="Gregg R.G."/>
        </authorList>
    </citation>
    <scope>NUCLEOTIDE SEQUENCE [MRNA]</scope>
    <scope>VARIANTS HIS-458 AND ASP-1840</scope>
    <source>
        <tissue>Skeletal muscle</tissue>
    </source>
</reference>
<reference key="2">
    <citation type="journal article" date="1996" name="Genomics">
        <title>The structure of the gene encoding the human skeletal muscle alpha 1 subunit of the dihydropyridine-sensitive L-type calcium channel (CACNL1A3).</title>
        <authorList>
            <person name="Hogan K."/>
            <person name="Gregg R.G."/>
            <person name="Powers P.A."/>
        </authorList>
    </citation>
    <scope>NUCLEOTIDE SEQUENCE [GENOMIC DNA]</scope>
    <scope>VARIANT ASP-1840</scope>
</reference>
<reference key="3">
    <citation type="journal article" date="2006" name="Nature">
        <title>The DNA sequence and biological annotation of human chromosome 1.</title>
        <authorList>
            <person name="Gregory S.G."/>
            <person name="Barlow K.F."/>
            <person name="McLay K.E."/>
            <person name="Kaul R."/>
            <person name="Swarbreck D."/>
            <person name="Dunham A."/>
            <person name="Scott C.E."/>
            <person name="Howe K.L."/>
            <person name="Woodfine K."/>
            <person name="Spencer C.C.A."/>
            <person name="Jones M.C."/>
            <person name="Gillson C."/>
            <person name="Searle S."/>
            <person name="Zhou Y."/>
            <person name="Kokocinski F."/>
            <person name="McDonald L."/>
            <person name="Evans R."/>
            <person name="Phillips K."/>
            <person name="Atkinson A."/>
            <person name="Cooper R."/>
            <person name="Jones C."/>
            <person name="Hall R.E."/>
            <person name="Andrews T.D."/>
            <person name="Lloyd C."/>
            <person name="Ainscough R."/>
            <person name="Almeida J.P."/>
            <person name="Ambrose K.D."/>
            <person name="Anderson F."/>
            <person name="Andrew R.W."/>
            <person name="Ashwell R.I.S."/>
            <person name="Aubin K."/>
            <person name="Babbage A.K."/>
            <person name="Bagguley C.L."/>
            <person name="Bailey J."/>
            <person name="Beasley H."/>
            <person name="Bethel G."/>
            <person name="Bird C.P."/>
            <person name="Bray-Allen S."/>
            <person name="Brown J.Y."/>
            <person name="Brown A.J."/>
            <person name="Buckley D."/>
            <person name="Burton J."/>
            <person name="Bye J."/>
            <person name="Carder C."/>
            <person name="Chapman J.C."/>
            <person name="Clark S.Y."/>
            <person name="Clarke G."/>
            <person name="Clee C."/>
            <person name="Cobley V."/>
            <person name="Collier R.E."/>
            <person name="Corby N."/>
            <person name="Coville G.J."/>
            <person name="Davies J."/>
            <person name="Deadman R."/>
            <person name="Dunn M."/>
            <person name="Earthrowl M."/>
            <person name="Ellington A.G."/>
            <person name="Errington H."/>
            <person name="Frankish A."/>
            <person name="Frankland J."/>
            <person name="French L."/>
            <person name="Garner P."/>
            <person name="Garnett J."/>
            <person name="Gay L."/>
            <person name="Ghori M.R.J."/>
            <person name="Gibson R."/>
            <person name="Gilby L.M."/>
            <person name="Gillett W."/>
            <person name="Glithero R.J."/>
            <person name="Grafham D.V."/>
            <person name="Griffiths C."/>
            <person name="Griffiths-Jones S."/>
            <person name="Grocock R."/>
            <person name="Hammond S."/>
            <person name="Harrison E.S.I."/>
            <person name="Hart E."/>
            <person name="Haugen E."/>
            <person name="Heath P.D."/>
            <person name="Holmes S."/>
            <person name="Holt K."/>
            <person name="Howden P.J."/>
            <person name="Hunt A.R."/>
            <person name="Hunt S.E."/>
            <person name="Hunter G."/>
            <person name="Isherwood J."/>
            <person name="James R."/>
            <person name="Johnson C."/>
            <person name="Johnson D."/>
            <person name="Joy A."/>
            <person name="Kay M."/>
            <person name="Kershaw J.K."/>
            <person name="Kibukawa M."/>
            <person name="Kimberley A.M."/>
            <person name="King A."/>
            <person name="Knights A.J."/>
            <person name="Lad H."/>
            <person name="Laird G."/>
            <person name="Lawlor S."/>
            <person name="Leongamornlert D.A."/>
            <person name="Lloyd D.M."/>
            <person name="Loveland J."/>
            <person name="Lovell J."/>
            <person name="Lush M.J."/>
            <person name="Lyne R."/>
            <person name="Martin S."/>
            <person name="Mashreghi-Mohammadi M."/>
            <person name="Matthews L."/>
            <person name="Matthews N.S.W."/>
            <person name="McLaren S."/>
            <person name="Milne S."/>
            <person name="Mistry S."/>
            <person name="Moore M.J.F."/>
            <person name="Nickerson T."/>
            <person name="O'Dell C.N."/>
            <person name="Oliver K."/>
            <person name="Palmeiri A."/>
            <person name="Palmer S.A."/>
            <person name="Parker A."/>
            <person name="Patel D."/>
            <person name="Pearce A.V."/>
            <person name="Peck A.I."/>
            <person name="Pelan S."/>
            <person name="Phelps K."/>
            <person name="Phillimore B.J."/>
            <person name="Plumb R."/>
            <person name="Rajan J."/>
            <person name="Raymond C."/>
            <person name="Rouse G."/>
            <person name="Saenphimmachak C."/>
            <person name="Sehra H.K."/>
            <person name="Sheridan E."/>
            <person name="Shownkeen R."/>
            <person name="Sims S."/>
            <person name="Skuce C.D."/>
            <person name="Smith M."/>
            <person name="Steward C."/>
            <person name="Subramanian S."/>
            <person name="Sycamore N."/>
            <person name="Tracey A."/>
            <person name="Tromans A."/>
            <person name="Van Helmond Z."/>
            <person name="Wall M."/>
            <person name="Wallis J.M."/>
            <person name="White S."/>
            <person name="Whitehead S.L."/>
            <person name="Wilkinson J.E."/>
            <person name="Willey D.L."/>
            <person name="Williams H."/>
            <person name="Wilming L."/>
            <person name="Wray P.W."/>
            <person name="Wu Z."/>
            <person name="Coulson A."/>
            <person name="Vaudin M."/>
            <person name="Sulston J.E."/>
            <person name="Durbin R.M."/>
            <person name="Hubbard T."/>
            <person name="Wooster R."/>
            <person name="Dunham I."/>
            <person name="Carter N.P."/>
            <person name="McVean G."/>
            <person name="Ross M.T."/>
            <person name="Harrow J."/>
            <person name="Olson M.V."/>
            <person name="Beck S."/>
            <person name="Rogers J."/>
            <person name="Bentley D.R."/>
        </authorList>
    </citation>
    <scope>NUCLEOTIDE SEQUENCE [LARGE SCALE GENOMIC DNA]</scope>
</reference>
<reference key="4">
    <citation type="journal article" date="2004" name="Genome Res.">
        <title>The status, quality, and expansion of the NIH full-length cDNA project: the Mammalian Gene Collection (MGC).</title>
        <authorList>
            <consortium name="The MGC Project Team"/>
        </authorList>
    </citation>
    <scope>NUCLEOTIDE SEQUENCE [LARGE SCALE MRNA]</scope>
    <scope>VARIANT SER-1800</scope>
</reference>
<reference key="5">
    <citation type="journal article" date="1993" name="Genomics">
        <title>Assignment of the human gene for the alpha-1 subunit of the skeletal muscle DHP-sensitive calcium channel (CACNL1A3) to chromosome 1q31-q32.</title>
        <authorList>
            <person name="Gregg R.G."/>
            <person name="Couch F."/>
            <person name="Hogan K."/>
            <person name="Powers P.A."/>
        </authorList>
    </citation>
    <scope>NUCLEOTIDE SEQUENCE [GENOMIC DNA] OF 788-830; 1019-1085 AND 1293-1318</scope>
</reference>
<reference key="6">
    <citation type="journal article" date="1994" name="Cell">
        <title>Dihydropyridine receptor mutations cause hypokalemic periodic paralysis.</title>
        <authorList>
            <person name="Ptacek L.J."/>
            <person name="Tawil R."/>
            <person name="Griggs R.C."/>
            <person name="Engel A.G."/>
            <person name="Layzer R.B."/>
            <person name="Kwiecinski H."/>
            <person name="McManis P.G."/>
            <person name="Santiago L."/>
            <person name="Moore M."/>
            <person name="Fouad G."/>
            <person name="Bradley P."/>
            <person name="Leppert M.F."/>
        </authorList>
    </citation>
    <scope>NUCLEOTIDE SEQUENCE [MRNA] OF 1200-1300</scope>
    <scope>VARIANTS HOKPP1 GLY-1239 AND HIS-1239</scope>
</reference>
<reference key="7">
    <citation type="submission" date="1995-07" db="EMBL/GenBank/DDBJ databases">
        <title>Human skeletal muscle L-type Ca2+ channel alpha 1S subunit gene shows splicing patterns similar to alpha 1C and alpha 1D genes in the region involved in hereditary disorders.</title>
        <authorList>
            <person name="Soldatov N.M."/>
        </authorList>
    </citation>
    <scope>NUCLEOTIDE SEQUENCE [GENOMIC DNA] OF 1223-1413</scope>
</reference>
<reference key="8">
    <citation type="journal article" date="2004" name="J. Clin. Endocrinol. Metab.">
        <title>Association of novel single nucleotide polymorphisms in the calcium channel alpha 1 subunit gene (Ca(v)1.1) and thyrotoxic periodic paralysis.</title>
        <authorList>
            <person name="Kung A.W."/>
            <person name="Lau K.S."/>
            <person name="Fong G.C."/>
            <person name="Chan V."/>
        </authorList>
    </citation>
    <scope>INVOLVEMENT IN SUSCEPTIBILITY TO TTPP1</scope>
</reference>
<reference evidence="23" key="9">
    <citation type="journal article" date="2009" name="J. Biol. Chem.">
        <title>Determinants in CaV1 channels that regulate the Ca2+ sensitivity of bound calmodulin.</title>
        <authorList>
            <person name="Halling D.B."/>
            <person name="Georgiou D.K."/>
            <person name="Black D.J."/>
            <person name="Yang G."/>
            <person name="Fallon J.L."/>
            <person name="Quiocho F.A."/>
            <person name="Pedersen S.E."/>
            <person name="Hamilton S.L."/>
        </authorList>
    </citation>
    <scope>X-RAY CRYSTALLOGRAPHY (1.94 ANGSTROMS) OF 1522-1542 IN COMPLEX WITH CALM</scope>
</reference>
<reference evidence="24" key="10">
    <citation type="journal article" date="2017" name="Proc. Natl. Acad. Sci. U.S.A.">
        <title>Structural insights into binding of STAC proteins to voltage-gated calcium channels.</title>
        <authorList>
            <person name="Wong King Yuen S.M."/>
            <person name="Campiglio M."/>
            <person name="Tung C.C."/>
            <person name="Flucher B.E."/>
            <person name="Van Petegem F."/>
        </authorList>
    </citation>
    <scope>X-RAY CRYSTALLOGRAPHY (1.73 ANGSTROMS) OF 747-760 IN COMPLEX WITH STAC2</scope>
    <scope>INTERACTION WITH STAC; STAC2 AND STAC3</scope>
</reference>
<reference key="11">
    <citation type="journal article" date="1994" name="Hum. Mol. Genet.">
        <title>A calcium channel mutation causing hypokalemic periodic paralysis.</title>
        <authorList>
            <person name="Jurkatt-Rott K."/>
            <person name="Lehmann-Horn F."/>
            <person name="Elbaz A."/>
            <person name="Heine R."/>
            <person name="Gregg R.G."/>
            <person name="Hogan K."/>
            <person name="Powers P.A."/>
            <person name="Lapie P."/>
            <person name="Vale-Santos J.E."/>
            <person name="Weissenbach J."/>
            <person name="Fontaine B."/>
        </authorList>
    </citation>
    <scope>VARIANT HOKPP1 HIS-528</scope>
</reference>
<reference key="12">
    <citation type="journal article" date="1997" name="Am. J. Hum. Genet.">
        <title>Malignant-hyperthermia susceptibility is associated with a mutation of the alpha-1-subunit of the human dihydropyridine-sensitive L-type voltage-dependent calcium-channel receptor in skeletal muscle.</title>
        <authorList>
            <person name="Monnier N."/>
            <person name="Procaccio V."/>
            <person name="Stieglitz P."/>
            <person name="Lunardi J."/>
        </authorList>
    </citation>
    <scope>SEQUENCE REVISION</scope>
    <scope>VARIANT MHS5 HIS-1086</scope>
    <scope>VARIANTS HIS-458 AND CYS-1539</scope>
</reference>
<reference key="13">
    <citation type="journal article" date="2017" name="Acta Neuropathol.">
        <title>Dihydropyridine receptor (DHPR, CACNA1S) congenital myopathy.</title>
        <authorList>
            <person name="Schartner V."/>
            <person name="Romero N.B."/>
            <person name="Donkervoort S."/>
            <person name="Treves S."/>
            <person name="Munot P."/>
            <person name="Pierson T.M."/>
            <person name="Dabaj I."/>
            <person name="Malfatti E."/>
            <person name="Zaharieva I.T."/>
            <person name="Zorzato F."/>
            <person name="Abath Neto O."/>
            <person name="Brochier G."/>
            <person name="Lornage X."/>
            <person name="Eymard B."/>
            <person name="Taratuto A.L."/>
            <person name="Boehm J."/>
            <person name="Gonorazky H."/>
            <person name="Ramos-Platt L."/>
            <person name="Feng L."/>
            <person name="Phadke R."/>
            <person name="Bharucha-Goebel D.X."/>
            <person name="Sumner C.J."/>
            <person name="Bui M.T."/>
            <person name="Lacene E."/>
            <person name="Beuvin M."/>
            <person name="Labasse C."/>
            <person name="Dondaine N."/>
            <person name="Schneider R."/>
            <person name="Thompson J."/>
            <person name="Boland A."/>
            <person name="Deleuze J.F."/>
            <person name="Matthews E."/>
            <person name="Pakleza A.N."/>
            <person name="Sewry C.A."/>
            <person name="Biancalana V."/>
            <person name="Quijano-Roy S."/>
            <person name="Muntoni F."/>
            <person name="Fardeau M."/>
            <person name="Boennemann C.G."/>
            <person name="Laporte J."/>
        </authorList>
    </citation>
    <scope>INVOLVEMENT IN CMYO18</scope>
    <scope>VARIANTS CMYO18 LYS-100; LEU-275; GLN-742; SER-742; VAL-1367 AND 1485-GLN--LEU-1873 DEL</scope>
    <scope>CHARACTERIZATION OF VARIANTS CMYO18 GLN-742; SER-742 AND VAL-1367</scope>
    <scope>FUNCTION</scope>
    <scope>SUBCELLULAR LOCATION</scope>
    <scope>TRANSPORTER ACTIVITY</scope>
</reference>
<reference key="14">
    <citation type="journal article" date="2007" name="J. Korean Med. Sci.">
        <title>The genotype and clinical phenotype of Korean patients with familial hypokalemic periodic paralysis.</title>
        <authorList>
            <person name="Kim J.-B."/>
            <person name="Kim M.-H."/>
            <person name="Lee S.J."/>
            <person name="Kim D.-J."/>
            <person name="Lee B.C."/>
        </authorList>
    </citation>
    <scope>VARIANTS HOKPP1 HIS-528; HIS-1239 AND GLY-1239</scope>
</reference>
<reference key="15">
    <citation type="journal article" date="2007" name="Neuromuscul. Disord.">
        <title>Hypokalaemic periodic paralysis due to the CACNA1S R1239H mutation in a large African family.</title>
        <authorList>
            <person name="Houinato D."/>
            <person name="Laleye A."/>
            <person name="Adjien C."/>
            <person name="Adjagba M."/>
            <person name="Sternberg D."/>
            <person name="Hilbert P."/>
            <person name="Vallat J.M."/>
            <person name="Darboux R.B."/>
            <person name="Funalot B."/>
            <person name="Avode D.G."/>
        </authorList>
    </citation>
    <scope>VARIANT HOKPP1 HIS-1239</scope>
</reference>
<reference key="16">
    <citation type="journal article" date="2009" name="Neurology">
        <title>Voltage sensor charge loss accounts for most cases of hypokalemic periodic paralysis.</title>
        <authorList>
            <person name="Matthews E."/>
            <person name="Labrum R."/>
            <person name="Sweeney M.G."/>
            <person name="Sud R."/>
            <person name="Haworth A."/>
            <person name="Chinnery P.F."/>
            <person name="Meola G."/>
            <person name="Schorge S."/>
            <person name="Kullmann D.M."/>
            <person name="Davis M.B."/>
            <person name="Hanna M.G."/>
        </authorList>
    </citation>
    <scope>VARIANTS HOKPP1 GLY-528; HIS-528; SER-900; GLY-1239 AND HIS-1239</scope>
</reference>
<reference key="17">
    <citation type="journal article" date="2019" name="J. Neuromuscul. Dis.">
        <title>Dihydropyridine Receptor Congenital Myopathy In A Consangineous Turkish Family.</title>
        <authorList>
            <person name="Yis U."/>
            <person name="Hiz S."/>
            <person name="Guenes S."/>
            <person name="Diniz G."/>
            <person name="Baydan F."/>
            <person name="Toepf A."/>
            <person name="Sonmezler E."/>
            <person name="Lochmueller H."/>
            <person name="Horvath R."/>
            <person name="Oktay Y."/>
        </authorList>
    </citation>
    <scope>VARIANT CMYO18 HIS-789</scope>
</reference>
<reference key="18">
    <citation type="journal article" date="2021" name="J. Med. Genet.">
        <title>Neurogenetic fetal akinesia and arthrogryposis: genetics, expanding genotype-phenotypes and functional genomics.</title>
        <authorList>
            <person name="Ravenscroft G."/>
            <person name="Clayton J.S."/>
            <person name="Faiz F."/>
            <person name="Sivadorai P."/>
            <person name="Milnes D."/>
            <person name="Cincotta R."/>
            <person name="Moon P."/>
            <person name="Kamien B."/>
            <person name="Edwards M."/>
            <person name="Delatycki M."/>
            <person name="Lamont P.J."/>
            <person name="Chan S.H."/>
            <person name="Colley A."/>
            <person name="Ma A."/>
            <person name="Collins F."/>
            <person name="Hennington L."/>
            <person name="Zhao T."/>
            <person name="McGillivray G."/>
            <person name="Ghedia S."/>
            <person name="Chao K."/>
            <person name="O'Donnell-Luria A."/>
            <person name="Laing N.G."/>
            <person name="Davis M.R."/>
        </authorList>
    </citation>
    <scope>VARIANTS CMYO18 LYS-222 AND CYS-789</scope>
</reference>
<accession>Q13698</accession>
<accession>A4IF51</accession>
<accession>B1ALM2</accession>
<accession>Q12896</accession>
<accession>Q13934</accession>
<feature type="chain" id="PRO_0000053943" description="Voltage-dependent L-type calcium channel subunit alpha-1S">
    <location>
        <begin position="1"/>
        <end position="1873"/>
    </location>
</feature>
<feature type="topological domain" description="Cytoplasmic" evidence="22">
    <location>
        <begin position="1"/>
        <end position="51"/>
    </location>
</feature>
<feature type="transmembrane region" description="Helical; Name=S1 of repeat I" evidence="1">
    <location>
        <begin position="52"/>
        <end position="70"/>
    </location>
</feature>
<feature type="topological domain" description="Extracellular" evidence="22">
    <location>
        <begin position="71"/>
        <end position="85"/>
    </location>
</feature>
<feature type="transmembrane region" description="Helical; Name=S2 of repeat I" evidence="1">
    <location>
        <begin position="86"/>
        <end position="106"/>
    </location>
</feature>
<feature type="topological domain" description="Cytoplasmic" evidence="22">
    <location>
        <begin position="107"/>
        <end position="115"/>
    </location>
</feature>
<feature type="transmembrane region" description="Helical; Name=S3 of repeat I" evidence="1">
    <location>
        <begin position="116"/>
        <end position="136"/>
    </location>
</feature>
<feature type="topological domain" description="Extracellular" evidence="22">
    <location>
        <begin position="137"/>
        <end position="160"/>
    </location>
</feature>
<feature type="transmembrane region" description="Helical; Name=S4 of repeat I" evidence="1">
    <location>
        <begin position="161"/>
        <end position="179"/>
    </location>
</feature>
<feature type="topological domain" description="Cytoplasmic" evidence="22">
    <location>
        <begin position="180"/>
        <end position="196"/>
    </location>
</feature>
<feature type="transmembrane region" description="Helical; Name=S5 of repeat I" evidence="1">
    <location>
        <begin position="197"/>
        <end position="218"/>
    </location>
</feature>
<feature type="topological domain" description="Extracellular" evidence="22">
    <location>
        <begin position="219"/>
        <end position="279"/>
    </location>
</feature>
<feature type="intramembrane region" description="Pore-forming" evidence="1">
    <location>
        <begin position="280"/>
        <end position="301"/>
    </location>
</feature>
<feature type="topological domain" description="Extracellular" evidence="22">
    <location>
        <begin position="302"/>
        <end position="309"/>
    </location>
</feature>
<feature type="transmembrane region" description="Helical; Name=S6 of repeat I" evidence="1">
    <location>
        <begin position="310"/>
        <end position="330"/>
    </location>
</feature>
<feature type="topological domain" description="Cytoplasmic" evidence="22">
    <location>
        <begin position="331"/>
        <end position="432"/>
    </location>
</feature>
<feature type="transmembrane region" description="Helical; Name=S1 of repeat II" evidence="1">
    <location>
        <begin position="433"/>
        <end position="451"/>
    </location>
</feature>
<feature type="topological domain" description="Extracellular" evidence="22">
    <location>
        <begin position="452"/>
        <end position="462"/>
    </location>
</feature>
<feature type="transmembrane region" description="Helical; Name=S2 of repeat II" evidence="1">
    <location>
        <begin position="463"/>
        <end position="483"/>
    </location>
</feature>
<feature type="topological domain" description="Cytoplasmic" evidence="22">
    <location>
        <begin position="484"/>
        <end position="494"/>
    </location>
</feature>
<feature type="transmembrane region" description="Helical; Name=S3 of repeat II" evidence="1">
    <location>
        <begin position="495"/>
        <end position="514"/>
    </location>
</feature>
<feature type="topological domain" description="Extracellular" evidence="22">
    <location>
        <begin position="515"/>
        <end position="523"/>
    </location>
</feature>
<feature type="transmembrane region" description="Helical; Name=S4 of repeat II" evidence="1">
    <location>
        <begin position="524"/>
        <end position="542"/>
    </location>
</feature>
<feature type="topological domain" description="Cytoplasmic" evidence="22">
    <location>
        <begin position="543"/>
        <end position="561"/>
    </location>
</feature>
<feature type="transmembrane region" description="Helical; Name=S5 of repeat II" evidence="1">
    <location>
        <begin position="562"/>
        <end position="581"/>
    </location>
</feature>
<feature type="topological domain" description="Extracellular" evidence="22">
    <location>
        <begin position="582"/>
        <end position="601"/>
    </location>
</feature>
<feature type="intramembrane region" description="Pore-forming" evidence="1">
    <location>
        <begin position="602"/>
        <end position="623"/>
    </location>
</feature>
<feature type="topological domain" description="Extracellular" evidence="22">
    <location>
        <begin position="624"/>
        <end position="633"/>
    </location>
</feature>
<feature type="transmembrane region" description="Helical; Name=S6 of repeat II" evidence="1">
    <location>
        <begin position="634"/>
        <end position="653"/>
    </location>
</feature>
<feature type="topological domain" description="Cytoplasmic" evidence="22">
    <location>
        <begin position="654"/>
        <end position="799"/>
    </location>
</feature>
<feature type="transmembrane region" description="Helical; Name=S1 of repeat III" evidence="1">
    <location>
        <begin position="800"/>
        <end position="818"/>
    </location>
</feature>
<feature type="topological domain" description="Extracellular" evidence="22">
    <location>
        <begin position="819"/>
        <end position="830"/>
    </location>
</feature>
<feature type="transmembrane region" description="Helical; Name=S2 of repeat III" evidence="1">
    <location>
        <begin position="831"/>
        <end position="850"/>
    </location>
</feature>
<feature type="topological domain" description="Cytoplasmic" evidence="22">
    <location>
        <begin position="851"/>
        <end position="866"/>
    </location>
</feature>
<feature type="transmembrane region" description="Helical; Name=S3 of repeat III" evidence="1">
    <location>
        <begin position="867"/>
        <end position="885"/>
    </location>
</feature>
<feature type="topological domain" description="Extracellular" evidence="22">
    <location>
        <begin position="886"/>
        <end position="892"/>
    </location>
</feature>
<feature type="transmembrane region" description="Helical; Name=S4 of repeat III" evidence="1">
    <location>
        <begin position="893"/>
        <end position="911"/>
    </location>
</feature>
<feature type="topological domain" description="Cytoplasmic" evidence="22">
    <location>
        <begin position="912"/>
        <end position="930"/>
    </location>
</feature>
<feature type="transmembrane region" description="Helical; Name=S5 of repeat III" evidence="1">
    <location>
        <begin position="931"/>
        <end position="950"/>
    </location>
</feature>
<feature type="topological domain" description="Extracellular" evidence="22">
    <location>
        <begin position="951"/>
        <end position="1000"/>
    </location>
</feature>
<feature type="intramembrane region" description="Pore-forming" evidence="1">
    <location>
        <begin position="1001"/>
        <end position="1021"/>
    </location>
</feature>
<feature type="topological domain" description="Extracellular" evidence="22">
    <location>
        <begin position="1022"/>
        <end position="1038"/>
    </location>
</feature>
<feature type="transmembrane region" description="Helical; Name=S6 of repeat III" evidence="1">
    <location>
        <begin position="1039"/>
        <end position="1060"/>
    </location>
</feature>
<feature type="topological domain" description="Cytoplasmic" evidence="22">
    <location>
        <begin position="1061"/>
        <end position="1118"/>
    </location>
</feature>
<feature type="transmembrane region" description="Helical; Name=S1 of repeat IV" evidence="1">
    <location>
        <begin position="1119"/>
        <end position="1140"/>
    </location>
</feature>
<feature type="topological domain" description="Extracellular" evidence="22">
    <location>
        <begin position="1141"/>
        <end position="1148"/>
    </location>
</feature>
<feature type="transmembrane region" description="Helical; Name=S2 of repeat IV" evidence="1">
    <location>
        <begin position="1149"/>
        <end position="1170"/>
    </location>
</feature>
<feature type="topological domain" description="Cytoplasmic" evidence="22">
    <location>
        <begin position="1171"/>
        <end position="1180"/>
    </location>
</feature>
<feature type="transmembrane region" description="Helical; Name=S3 of repeat IV" evidence="1">
    <location>
        <begin position="1181"/>
        <end position="1200"/>
    </location>
</feature>
<feature type="topological domain" description="Extracellular" evidence="22">
    <location>
        <begin position="1201"/>
        <end position="1231"/>
    </location>
</feature>
<feature type="transmembrane region" description="Helical; Name=S4 of repeat IV" evidence="1">
    <location>
        <begin position="1232"/>
        <end position="1250"/>
    </location>
</feature>
<feature type="topological domain" description="Cytoplasmic" evidence="22">
    <location>
        <begin position="1251"/>
        <end position="1268"/>
    </location>
</feature>
<feature type="transmembrane region" description="Helical; Name=S5 of repeat IV" evidence="1">
    <location>
        <begin position="1269"/>
        <end position="1289"/>
    </location>
</feature>
<feature type="topological domain" description="Extracellular" evidence="22">
    <location>
        <begin position="1290"/>
        <end position="1311"/>
    </location>
</feature>
<feature type="intramembrane region" description="Pore-forming" evidence="1">
    <location>
        <begin position="1312"/>
        <end position="1330"/>
    </location>
</feature>
<feature type="topological domain" description="Extracellular" evidence="22">
    <location>
        <begin position="1331"/>
        <end position="1356"/>
    </location>
</feature>
<feature type="transmembrane region" description="Helical; Name=S6 of repeat IV" evidence="1">
    <location>
        <begin position="1357"/>
        <end position="1381"/>
    </location>
</feature>
<feature type="topological domain" description="Cytoplasmic" evidence="22">
    <location>
        <begin position="1382"/>
        <end position="1873"/>
    </location>
</feature>
<feature type="repeat" description="I" evidence="22">
    <location>
        <begin position="38"/>
        <end position="337"/>
    </location>
</feature>
<feature type="repeat" description="II" evidence="22">
    <location>
        <begin position="418"/>
        <end position="664"/>
    </location>
</feature>
<feature type="repeat" description="III" evidence="22">
    <location>
        <begin position="786"/>
        <end position="1068"/>
    </location>
</feature>
<feature type="repeat" description="IV" evidence="22">
    <location>
        <begin position="1105"/>
        <end position="1384"/>
    </location>
</feature>
<feature type="region of interest" description="Disordered" evidence="4">
    <location>
        <begin position="1"/>
        <end position="23"/>
    </location>
</feature>
<feature type="region of interest" description="Binding to the beta subunit" evidence="2">
    <location>
        <begin position="357"/>
        <end position="374"/>
    </location>
</feature>
<feature type="region of interest" description="Disordered" evidence="4">
    <location>
        <begin position="675"/>
        <end position="717"/>
    </location>
</feature>
<feature type="region of interest" description="Disordered" evidence="4">
    <location>
        <begin position="731"/>
        <end position="757"/>
    </location>
</feature>
<feature type="region of interest" description="Interaction with STAC, STAC2 and STAC3 (via SH3 domains)" evidence="12">
    <location>
        <begin position="747"/>
        <end position="760"/>
    </location>
</feature>
<feature type="region of interest" description="Dihydropyridine binding" evidence="1">
    <location>
        <begin position="988"/>
        <end position="1077"/>
    </location>
</feature>
<feature type="region of interest" description="Dihydropyridine binding" evidence="1">
    <location>
        <begin position="1337"/>
        <end position="1403"/>
    </location>
</feature>
<feature type="region of interest" description="Phenylalkylamine binding" evidence="1">
    <location>
        <begin position="1349"/>
        <end position="1391"/>
    </location>
</feature>
<feature type="region of interest" description="Interaction with calmodulin" evidence="10">
    <location>
        <begin position="1522"/>
        <end position="1542"/>
    </location>
</feature>
<feature type="region of interest" description="Disordered" evidence="4">
    <location>
        <begin position="1731"/>
        <end position="1780"/>
    </location>
</feature>
<feature type="short sequence motif" description="Selectivity filter of repeat I" evidence="1">
    <location>
        <begin position="290"/>
        <end position="293"/>
    </location>
</feature>
<feature type="short sequence motif" description="Selectivity filter of repeat II" evidence="1">
    <location>
        <begin position="612"/>
        <end position="615"/>
    </location>
</feature>
<feature type="short sequence motif" description="Selectivity filter of repeat III" evidence="1">
    <location>
        <begin position="1012"/>
        <end position="1015"/>
    </location>
</feature>
<feature type="short sequence motif" description="Selectivity filter of repeat IV" evidence="1">
    <location>
        <begin position="1321"/>
        <end position="1324"/>
    </location>
</feature>
<feature type="compositionally biased region" description="Basic and acidic residues" evidence="4">
    <location>
        <begin position="690"/>
        <end position="711"/>
    </location>
</feature>
<feature type="compositionally biased region" description="Acidic residues" evidence="4">
    <location>
        <begin position="742"/>
        <end position="751"/>
    </location>
</feature>
<feature type="compositionally biased region" description="Basic and acidic residues" evidence="4">
    <location>
        <begin position="1751"/>
        <end position="1776"/>
    </location>
</feature>
<feature type="binding site" evidence="1">
    <location>
        <position position="292"/>
    </location>
    <ligand>
        <name>Ca(2+)</name>
        <dbReference type="ChEBI" id="CHEBI:29108"/>
    </ligand>
</feature>
<feature type="binding site" evidence="1">
    <location>
        <position position="614"/>
    </location>
    <ligand>
        <name>Ca(2+)</name>
        <dbReference type="ChEBI" id="CHEBI:29108"/>
    </ligand>
</feature>
<feature type="binding site" evidence="1">
    <location>
        <position position="1014"/>
    </location>
    <ligand>
        <name>Ca(2+)</name>
        <dbReference type="ChEBI" id="CHEBI:29108"/>
    </ligand>
</feature>
<feature type="modified residue" description="Phosphoserine" evidence="2">
    <location>
        <position position="393"/>
    </location>
</feature>
<feature type="modified residue" description="Phosphoserine" evidence="2">
    <location>
        <position position="397"/>
    </location>
</feature>
<feature type="modified residue" description="Phosphoserine; by PKA" evidence="1">
    <location>
        <position position="687"/>
    </location>
</feature>
<feature type="modified residue" description="Phosphoserine; by PKA and CAMK2" evidence="1">
    <location>
        <position position="1575"/>
    </location>
</feature>
<feature type="modified residue" description="Phosphoserine; by PKA" evidence="1">
    <location>
        <position position="1617"/>
    </location>
</feature>
<feature type="glycosylation site" description="N-linked (GlcNAc...) asparagine" evidence="3">
    <location>
        <position position="79"/>
    </location>
</feature>
<feature type="glycosylation site" description="N-linked (GlcNAc...) asparagine" evidence="3">
    <location>
        <position position="257"/>
    </location>
</feature>
<feature type="glycosylation site" description="N-linked (GlcNAc...) asparagine" evidence="3">
    <location>
        <position position="1141"/>
    </location>
</feature>
<feature type="disulfide bond" evidence="1">
    <location>
        <begin position="226"/>
        <end position="254"/>
    </location>
</feature>
<feature type="disulfide bond" evidence="1">
    <location>
        <begin position="245"/>
        <end position="261"/>
    </location>
</feature>
<feature type="disulfide bond" evidence="1">
    <location>
        <begin position="957"/>
        <end position="968"/>
    </location>
</feature>
<feature type="disulfide bond" evidence="1">
    <location>
        <begin position="1338"/>
        <end position="1352"/>
    </location>
</feature>
<feature type="sequence variant" id="VAR_046970" description="In dbSNP:rs12406479.">
    <original>A</original>
    <variation>G</variation>
    <location>
        <position position="69"/>
    </location>
</feature>
<feature type="sequence variant" id="VAR_088226" description="In CMYO18; uncertain significance; dbSNP:rs1298520651." evidence="11">
    <original>E</original>
    <variation>K</variation>
    <location>
        <position position="100"/>
    </location>
</feature>
<feature type="sequence variant" id="VAR_088227" description="In CMYO18; uncertain significance; dbSNP:rs1287586310." evidence="14">
    <original>M</original>
    <variation>K</variation>
    <location>
        <position position="222"/>
    </location>
</feature>
<feature type="sequence variant" id="VAR_088228" description="In CMYO18; dbSNP:rs767806564." evidence="11">
    <original>F</original>
    <variation>L</variation>
    <location>
        <position position="275"/>
    </location>
</feature>
<feature type="sequence variant" id="VAR_001498" description="In dbSNP:rs12742169." evidence="15 19">
    <original>L</original>
    <variation>H</variation>
    <location>
        <position position="458"/>
    </location>
</feature>
<feature type="sequence variant" id="VAR_054953" description="In HOKPP1; dbSNP:rs80338778." evidence="9">
    <original>R</original>
    <variation>G</variation>
    <location>
        <position position="528"/>
    </location>
</feature>
<feature type="sequence variant" id="VAR_001499" description="In HOKPP1; dbSNP:rs80338777." evidence="8 9 16">
    <original>R</original>
    <variation>H</variation>
    <location>
        <position position="528"/>
    </location>
</feature>
<feature type="sequence variant" id="VAR_088229" description="In CMYO18; decreased protein abundance." evidence="11">
    <original>P</original>
    <variation>Q</variation>
    <location>
        <position position="742"/>
    </location>
</feature>
<feature type="sequence variant" id="VAR_088230" description="In CMYO18; decreased protein abundance." evidence="11">
    <original>P</original>
    <variation>S</variation>
    <location>
        <position position="742"/>
    </location>
</feature>
<feature type="sequence variant" id="VAR_088231" description="In CMYO18; uncertain significance; dbSNP:rs148895719." evidence="14">
    <original>R</original>
    <variation>C</variation>
    <location>
        <position position="789"/>
    </location>
</feature>
<feature type="sequence variant" id="VAR_088232" description="In CMYO18; uncertain significance; dbSNP:rs1157720606." evidence="13">
    <original>R</original>
    <variation>H</variation>
    <location>
        <position position="789"/>
    </location>
</feature>
<feature type="sequence variant" id="VAR_054954" description="In HOKPP1; dbSNP:rs2102582533." evidence="9">
    <original>R</original>
    <variation>S</variation>
    <location>
        <position position="900"/>
    </location>
</feature>
<feature type="sequence variant" id="VAR_001500" description="In MHS5; dbSNP:rs1800559." evidence="19">
    <original>R</original>
    <variation>H</variation>
    <location>
        <position position="1086"/>
    </location>
</feature>
<feature type="sequence variant" id="VAR_001501" description="In HOKPP1; dbSNP:rs28930069." evidence="8 9 17">
    <original>R</original>
    <variation>G</variation>
    <location>
        <position position="1239"/>
    </location>
</feature>
<feature type="sequence variant" id="VAR_001502" description="In HOKPP1; dbSNP:rs28930068." evidence="7 8 9 17">
    <original>R</original>
    <variation>H</variation>
    <location>
        <position position="1239"/>
    </location>
</feature>
<feature type="sequence variant" id="VAR_088233" description="In CMYO18; uncertain significance; patient myotubes show decreased depolarization-induced release of sequestered calcium ion into cytosol compared to control; dbSNP:rs1660628086." evidence="11">
    <original>L</original>
    <variation>V</variation>
    <location>
        <position position="1367"/>
    </location>
</feature>
<feature type="sequence variant" id="VAR_088234" description="In CMYO18." evidence="11">
    <location>
        <begin position="1485"/>
        <end position="1873"/>
    </location>
</feature>
<feature type="sequence variant" id="VAR_001503" description="In dbSNP:rs3850625." evidence="19">
    <original>R</original>
    <variation>C</variation>
    <location>
        <position position="1539"/>
    </location>
</feature>
<feature type="sequence variant" id="VAR_046971" description="In dbSNP:rs13374149.">
    <original>R</original>
    <variation>H</variation>
    <location>
        <position position="1658"/>
    </location>
</feature>
<feature type="sequence variant" id="VAR_046972" description="In dbSNP:rs12139527." evidence="6">
    <original>L</original>
    <variation>S</variation>
    <location>
        <position position="1800"/>
    </location>
</feature>
<feature type="sequence variant" id="VAR_046973" description="In dbSNP:rs1042379." evidence="15 18">
    <original>E</original>
    <variation>D</variation>
    <location>
        <position position="1840"/>
    </location>
</feature>
<feature type="sequence conflict" description="In Ref. 2; AAB37235." evidence="22" ref="2">
    <original>R</original>
    <variation>S</variation>
    <location>
        <position position="26"/>
    </location>
</feature>
<feature type="sequence conflict" description="In Ref. 1; AAA51902 and 2; AAB37235." evidence="22" ref="1 2">
    <original>W</original>
    <variation>C</variation>
    <location>
        <position position="265"/>
    </location>
</feature>
<feature type="sequence conflict" description="In Ref. 1; AAA51902 and 2; AAB37235." evidence="22" ref="1 2">
    <original>A</original>
    <variation>R</variation>
    <location>
        <position position="574"/>
    </location>
</feature>
<feature type="sequence conflict" description="In Ref. 1; AAA51902." evidence="22" ref="1">
    <original>YG</original>
    <variation>SS</variation>
    <location>
        <begin position="627"/>
        <end position="628"/>
    </location>
</feature>
<feature type="sequence conflict" description="In Ref. 2; AAB37235." evidence="22" ref="2">
    <original>G</original>
    <variation>R</variation>
    <location>
        <position position="628"/>
    </location>
</feature>
<feature type="sequence conflict" description="In Ref. 2; AAB37235." evidence="22" ref="2">
    <location>
        <begin position="916"/>
        <end position="919"/>
    </location>
</feature>
<feature type="sequence conflict" description="In Ref. 1; AAA51902." evidence="22" ref="1">
    <original>VQ</original>
    <variation>AR</variation>
    <location>
        <begin position="918"/>
        <end position="919"/>
    </location>
</feature>
<feature type="sequence conflict" description="In Ref. 1; AAA51902 and 2; AAB37235." evidence="22" ref="1 2">
    <original>D</original>
    <variation>N</variation>
    <location>
        <position position="1180"/>
    </location>
</feature>
<feature type="sequence conflict" description="In Ref. 6; AAA20531." evidence="22" ref="6">
    <original>LV</original>
    <variation>FE</variation>
    <location>
        <begin position="1294"/>
        <end position="1295"/>
    </location>
</feature>
<feature type="sequence conflict" description="In Ref. 2; AAB37235." evidence="22" ref="2">
    <original>R</original>
    <variation>RHA</variation>
    <location>
        <position position="1318"/>
    </location>
</feature>
<feature type="sequence conflict" description="In Ref. 2; AAB37235." evidence="22" ref="2">
    <original>R</original>
    <variation>G</variation>
    <location>
        <position position="1472"/>
    </location>
</feature>
<feature type="sequence conflict" description="In Ref. 2; AAB37235." evidence="22" ref="2">
    <original>I</original>
    <variation>M</variation>
    <location>
        <position position="1510"/>
    </location>
</feature>
<feature type="sequence conflict" description="In Ref. 2; AAB37235." evidence="22" ref="2">
    <original>H</original>
    <variation>D</variation>
    <location>
        <position position="1532"/>
    </location>
</feature>
<feature type="sequence conflict" description="In Ref. 1; AAA51902 and 2; AAB37235." evidence="22" ref="1 2">
    <original>G</original>
    <variation>A</variation>
    <location>
        <position position="1671"/>
    </location>
</feature>
<feature type="sequence conflict" description="In Ref. 1; AAA51902." evidence="22" ref="1">
    <original>V</original>
    <variation>S</variation>
    <location>
        <position position="1710"/>
    </location>
</feature>
<feature type="sequence conflict" description="In Ref. 1; AAA51902 and 2; AAB37235." evidence="22" ref="1 2">
    <original>A</original>
    <variation>G</variation>
    <location>
        <position position="1815"/>
    </location>
</feature>
<feature type="helix" evidence="25">
    <location>
        <begin position="1523"/>
        <end position="1536"/>
    </location>
</feature>
<feature type="helix" evidence="25">
    <location>
        <begin position="1538"/>
        <end position="1541"/>
    </location>
</feature>
<name>CAC1S_HUMAN</name>
<gene>
    <name type="primary">CACNA1S</name>
    <name type="synonym">CACH1</name>
    <name type="synonym">CACN1</name>
    <name evidence="20 21" type="synonym">CACNL1A3</name>
</gene>